<dbReference type="EC" id="2.5.1.19" evidence="1"/>
<dbReference type="EMBL" id="AP009152">
    <property type="protein sequence ID" value="BAG29287.1"/>
    <property type="molecule type" value="Genomic_DNA"/>
</dbReference>
<dbReference type="RefSeq" id="WP_012398008.1">
    <property type="nucleotide sequence ID" value="NC_010617.1"/>
</dbReference>
<dbReference type="SMR" id="B2GLU6"/>
<dbReference type="STRING" id="378753.KRH_09400"/>
<dbReference type="KEGG" id="krh:KRH_09400"/>
<dbReference type="eggNOG" id="COG0128">
    <property type="taxonomic scope" value="Bacteria"/>
</dbReference>
<dbReference type="HOGENOM" id="CLU_024321_0_0_11"/>
<dbReference type="OrthoDB" id="9809920at2"/>
<dbReference type="UniPathway" id="UPA00053">
    <property type="reaction ID" value="UER00089"/>
</dbReference>
<dbReference type="Proteomes" id="UP000008838">
    <property type="component" value="Chromosome"/>
</dbReference>
<dbReference type="GO" id="GO:0005737">
    <property type="term" value="C:cytoplasm"/>
    <property type="evidence" value="ECO:0007669"/>
    <property type="project" value="UniProtKB-SubCell"/>
</dbReference>
<dbReference type="GO" id="GO:0003866">
    <property type="term" value="F:3-phosphoshikimate 1-carboxyvinyltransferase activity"/>
    <property type="evidence" value="ECO:0007669"/>
    <property type="project" value="UniProtKB-UniRule"/>
</dbReference>
<dbReference type="GO" id="GO:0008652">
    <property type="term" value="P:amino acid biosynthetic process"/>
    <property type="evidence" value="ECO:0007669"/>
    <property type="project" value="UniProtKB-KW"/>
</dbReference>
<dbReference type="GO" id="GO:0009073">
    <property type="term" value="P:aromatic amino acid family biosynthetic process"/>
    <property type="evidence" value="ECO:0007669"/>
    <property type="project" value="UniProtKB-KW"/>
</dbReference>
<dbReference type="GO" id="GO:0009423">
    <property type="term" value="P:chorismate biosynthetic process"/>
    <property type="evidence" value="ECO:0007669"/>
    <property type="project" value="UniProtKB-UniRule"/>
</dbReference>
<dbReference type="CDD" id="cd01556">
    <property type="entry name" value="EPSP_synthase"/>
    <property type="match status" value="1"/>
</dbReference>
<dbReference type="FunFam" id="3.65.10.10:FF:000010">
    <property type="entry name" value="3-phosphoshikimate 1-carboxyvinyltransferase"/>
    <property type="match status" value="1"/>
</dbReference>
<dbReference type="FunFam" id="3.65.10.10:FF:000011">
    <property type="entry name" value="3-phosphoshikimate 1-carboxyvinyltransferase"/>
    <property type="match status" value="1"/>
</dbReference>
<dbReference type="Gene3D" id="3.65.10.10">
    <property type="entry name" value="Enolpyruvate transferase domain"/>
    <property type="match status" value="2"/>
</dbReference>
<dbReference type="HAMAP" id="MF_00210">
    <property type="entry name" value="EPSP_synth"/>
    <property type="match status" value="1"/>
</dbReference>
<dbReference type="InterPro" id="IPR001986">
    <property type="entry name" value="Enolpyruvate_Tfrase_dom"/>
</dbReference>
<dbReference type="InterPro" id="IPR036968">
    <property type="entry name" value="Enolpyruvate_Tfrase_sf"/>
</dbReference>
<dbReference type="InterPro" id="IPR006264">
    <property type="entry name" value="EPSP_synthase"/>
</dbReference>
<dbReference type="InterPro" id="IPR023193">
    <property type="entry name" value="EPSP_synthase_CS"/>
</dbReference>
<dbReference type="InterPro" id="IPR013792">
    <property type="entry name" value="RNA3'P_cycl/enolpyr_Trfase_a/b"/>
</dbReference>
<dbReference type="NCBIfam" id="TIGR01356">
    <property type="entry name" value="aroA"/>
    <property type="match status" value="1"/>
</dbReference>
<dbReference type="PANTHER" id="PTHR21090">
    <property type="entry name" value="AROM/DEHYDROQUINATE SYNTHASE"/>
    <property type="match status" value="1"/>
</dbReference>
<dbReference type="PANTHER" id="PTHR21090:SF5">
    <property type="entry name" value="PENTAFUNCTIONAL AROM POLYPEPTIDE"/>
    <property type="match status" value="1"/>
</dbReference>
<dbReference type="Pfam" id="PF00275">
    <property type="entry name" value="EPSP_synthase"/>
    <property type="match status" value="1"/>
</dbReference>
<dbReference type="PIRSF" id="PIRSF000505">
    <property type="entry name" value="EPSPS"/>
    <property type="match status" value="1"/>
</dbReference>
<dbReference type="SUPFAM" id="SSF55205">
    <property type="entry name" value="EPT/RTPC-like"/>
    <property type="match status" value="1"/>
</dbReference>
<dbReference type="PROSITE" id="PS00104">
    <property type="entry name" value="EPSP_SYNTHASE_1"/>
    <property type="match status" value="1"/>
</dbReference>
<dbReference type="PROSITE" id="PS00885">
    <property type="entry name" value="EPSP_SYNTHASE_2"/>
    <property type="match status" value="1"/>
</dbReference>
<evidence type="ECO:0000255" key="1">
    <source>
        <dbReference type="HAMAP-Rule" id="MF_00210"/>
    </source>
</evidence>
<proteinExistence type="inferred from homology"/>
<sequence length="445" mass="46445">MTRNGLSHAQDDLWPAPFRHGSPVSGTVAVPGSKSLTNRYLVLAALASEPSLVRRPLHSRDSALMVAALQTLGAAVTPLPDPGPFGPDLRIDPVRRSAPAADPVRIDCGLAGTVMRFVPPLAALHTGQVDFDGDDAARVRPMGPVLDGLRQLGVHVVDQGRAALPFRVLGTGSVPGGTVTIDASGSSQFVSALLLAAVRFDSPLVLRHDAPGGVPSLPHVEMTLQVLRDAGVDARRVDERSWRVVPGDVAGLDVTVEPDLSNAGPFLAAAVATGGTVSIPDWPQHTTQGGDHWRHILPRFGADVTLREGVFTVTGPRELRGVDLDLSEAGELAPTVAALCALASGPSRLRGIAHLRGHETDRLAALSTELNGLGGAVTETLDGLAIEPTALHGGVFHTYQDHRMATAGAILGLRVPGVQVADIATTAKTLPEFPRMWAELVGSEG</sequence>
<name>AROA_KOCRD</name>
<comment type="function">
    <text evidence="1">Catalyzes the transfer of the enolpyruvyl moiety of phosphoenolpyruvate (PEP) to the 5-hydroxyl of shikimate-3-phosphate (S3P) to produce enolpyruvyl shikimate-3-phosphate and inorganic phosphate.</text>
</comment>
<comment type="catalytic activity">
    <reaction evidence="1">
        <text>3-phosphoshikimate + phosphoenolpyruvate = 5-O-(1-carboxyvinyl)-3-phosphoshikimate + phosphate</text>
        <dbReference type="Rhea" id="RHEA:21256"/>
        <dbReference type="ChEBI" id="CHEBI:43474"/>
        <dbReference type="ChEBI" id="CHEBI:57701"/>
        <dbReference type="ChEBI" id="CHEBI:58702"/>
        <dbReference type="ChEBI" id="CHEBI:145989"/>
        <dbReference type="EC" id="2.5.1.19"/>
    </reaction>
    <physiologicalReaction direction="left-to-right" evidence="1">
        <dbReference type="Rhea" id="RHEA:21257"/>
    </physiologicalReaction>
</comment>
<comment type="pathway">
    <text evidence="1">Metabolic intermediate biosynthesis; chorismate biosynthesis; chorismate from D-erythrose 4-phosphate and phosphoenolpyruvate: step 6/7.</text>
</comment>
<comment type="subunit">
    <text evidence="1">Monomer.</text>
</comment>
<comment type="subcellular location">
    <subcellularLocation>
        <location evidence="1">Cytoplasm</location>
    </subcellularLocation>
</comment>
<comment type="similarity">
    <text evidence="1">Belongs to the EPSP synthase family.</text>
</comment>
<accession>B2GLU6</accession>
<gene>
    <name evidence="1" type="primary">aroA</name>
    <name type="ordered locus">KRH_09400</name>
</gene>
<protein>
    <recommendedName>
        <fullName evidence="1">3-phosphoshikimate 1-carboxyvinyltransferase</fullName>
        <ecNumber evidence="1">2.5.1.19</ecNumber>
    </recommendedName>
    <alternativeName>
        <fullName evidence="1">5-enolpyruvylshikimate-3-phosphate synthase</fullName>
        <shortName evidence="1">EPSP synthase</shortName>
        <shortName evidence="1">EPSPS</shortName>
    </alternativeName>
</protein>
<feature type="chain" id="PRO_1000189564" description="3-phosphoshikimate 1-carboxyvinyltransferase">
    <location>
        <begin position="1"/>
        <end position="445"/>
    </location>
</feature>
<feature type="active site" description="Proton acceptor" evidence="1">
    <location>
        <position position="331"/>
    </location>
</feature>
<feature type="binding site" evidence="1">
    <location>
        <position position="34"/>
    </location>
    <ligand>
        <name>3-phosphoshikimate</name>
        <dbReference type="ChEBI" id="CHEBI:145989"/>
    </ligand>
</feature>
<feature type="binding site" evidence="1">
    <location>
        <position position="34"/>
    </location>
    <ligand>
        <name>phosphoenolpyruvate</name>
        <dbReference type="ChEBI" id="CHEBI:58702"/>
    </ligand>
</feature>
<feature type="binding site" evidence="1">
    <location>
        <position position="35"/>
    </location>
    <ligand>
        <name>3-phosphoshikimate</name>
        <dbReference type="ChEBI" id="CHEBI:145989"/>
    </ligand>
</feature>
<feature type="binding site" evidence="1">
    <location>
        <position position="39"/>
    </location>
    <ligand>
        <name>3-phosphoshikimate</name>
        <dbReference type="ChEBI" id="CHEBI:145989"/>
    </ligand>
</feature>
<feature type="binding site" evidence="1">
    <location>
        <position position="112"/>
    </location>
    <ligand>
        <name>phosphoenolpyruvate</name>
        <dbReference type="ChEBI" id="CHEBI:58702"/>
    </ligand>
</feature>
<feature type="binding site" evidence="1">
    <location>
        <position position="140"/>
    </location>
    <ligand>
        <name>phosphoenolpyruvate</name>
        <dbReference type="ChEBI" id="CHEBI:58702"/>
    </ligand>
</feature>
<feature type="binding site" evidence="1">
    <location>
        <position position="186"/>
    </location>
    <ligand>
        <name>3-phosphoshikimate</name>
        <dbReference type="ChEBI" id="CHEBI:145989"/>
    </ligand>
</feature>
<feature type="binding site" evidence="1">
    <location>
        <position position="187"/>
    </location>
    <ligand>
        <name>3-phosphoshikimate</name>
        <dbReference type="ChEBI" id="CHEBI:145989"/>
    </ligand>
</feature>
<feature type="binding site" evidence="1">
    <location>
        <position position="188"/>
    </location>
    <ligand>
        <name>3-phosphoshikimate</name>
        <dbReference type="ChEBI" id="CHEBI:145989"/>
    </ligand>
</feature>
<feature type="binding site" evidence="1">
    <location>
        <position position="188"/>
    </location>
    <ligand>
        <name>phosphoenolpyruvate</name>
        <dbReference type="ChEBI" id="CHEBI:58702"/>
    </ligand>
</feature>
<feature type="binding site" evidence="1">
    <location>
        <position position="216"/>
    </location>
    <ligand>
        <name>3-phosphoshikimate</name>
        <dbReference type="ChEBI" id="CHEBI:145989"/>
    </ligand>
</feature>
<feature type="binding site" evidence="1">
    <location>
        <position position="331"/>
    </location>
    <ligand>
        <name>3-phosphoshikimate</name>
        <dbReference type="ChEBI" id="CHEBI:145989"/>
    </ligand>
</feature>
<feature type="binding site" evidence="1">
    <location>
        <position position="358"/>
    </location>
    <ligand>
        <name>3-phosphoshikimate</name>
        <dbReference type="ChEBI" id="CHEBI:145989"/>
    </ligand>
</feature>
<feature type="binding site" evidence="1">
    <location>
        <position position="362"/>
    </location>
    <ligand>
        <name>phosphoenolpyruvate</name>
        <dbReference type="ChEBI" id="CHEBI:58702"/>
    </ligand>
</feature>
<feature type="binding site" evidence="1">
    <location>
        <position position="403"/>
    </location>
    <ligand>
        <name>phosphoenolpyruvate</name>
        <dbReference type="ChEBI" id="CHEBI:58702"/>
    </ligand>
</feature>
<feature type="binding site" evidence="1">
    <location>
        <position position="428"/>
    </location>
    <ligand>
        <name>phosphoenolpyruvate</name>
        <dbReference type="ChEBI" id="CHEBI:58702"/>
    </ligand>
</feature>
<keyword id="KW-0028">Amino-acid biosynthesis</keyword>
<keyword id="KW-0057">Aromatic amino acid biosynthesis</keyword>
<keyword id="KW-0963">Cytoplasm</keyword>
<keyword id="KW-1185">Reference proteome</keyword>
<keyword id="KW-0808">Transferase</keyword>
<reference key="1">
    <citation type="journal article" date="2008" name="J. Bacteriol.">
        <title>Complete genome sequence of the soil actinomycete Kocuria rhizophila.</title>
        <authorList>
            <person name="Takarada H."/>
            <person name="Sekine M."/>
            <person name="Kosugi H."/>
            <person name="Matsuo Y."/>
            <person name="Fujisawa T."/>
            <person name="Omata S."/>
            <person name="Kishi E."/>
            <person name="Shimizu A."/>
            <person name="Tsukatani N."/>
            <person name="Tanikawa S."/>
            <person name="Fujita N."/>
            <person name="Harayama S."/>
        </authorList>
    </citation>
    <scope>NUCLEOTIDE SEQUENCE [LARGE SCALE GENOMIC DNA]</scope>
    <source>
        <strain>ATCC 9341 / DSM 348 / NBRC 103217 / DC2201</strain>
    </source>
</reference>
<organism>
    <name type="scientific">Kocuria rhizophila (strain ATCC 9341 / DSM 348 / NBRC 103217 / DC2201)</name>
    <dbReference type="NCBI Taxonomy" id="378753"/>
    <lineage>
        <taxon>Bacteria</taxon>
        <taxon>Bacillati</taxon>
        <taxon>Actinomycetota</taxon>
        <taxon>Actinomycetes</taxon>
        <taxon>Micrococcales</taxon>
        <taxon>Micrococcaceae</taxon>
        <taxon>Kocuria</taxon>
    </lineage>
</organism>